<protein>
    <recommendedName>
        <fullName evidence="1">Malate dehydrogenase</fullName>
        <ecNumber evidence="1">1.1.1.37</ecNumber>
    </recommendedName>
</protein>
<sequence>MKKNPKISLIGSGNIGGMLAHLISLKNLGDIVLFDVAEGIPQGKALDIMQANTLAGSDIKIKGTNDYKDIEGSDAIIITAGLPRKPGMSRDDLISVNTGIMKSVAENVKKYAPNAFVIVITNPLDVMVYVMLKESGLPHNKVIGMAGVLDSSRFNFFLAEEFKVSTNSVSSIVLGGHGDAMVPLARYSTVKGVPIPDLVKMGLSTNERIEKIIDRTRNGGGEIVALLKTGSAYYAPAASAVEMLESYLQDKRQILTCAAYLQGEYGVKDLYAGVPIIIGKNGVEKVIELQLTTNEQALFDKSVDGVRKLIEAVK</sequence>
<name>MDH_RICB8</name>
<accession>A8GWI0</accession>
<comment type="function">
    <text evidence="1">Catalyzes the reversible oxidation of malate to oxaloacetate.</text>
</comment>
<comment type="catalytic activity">
    <reaction evidence="1">
        <text>(S)-malate + NAD(+) = oxaloacetate + NADH + H(+)</text>
        <dbReference type="Rhea" id="RHEA:21432"/>
        <dbReference type="ChEBI" id="CHEBI:15378"/>
        <dbReference type="ChEBI" id="CHEBI:15589"/>
        <dbReference type="ChEBI" id="CHEBI:16452"/>
        <dbReference type="ChEBI" id="CHEBI:57540"/>
        <dbReference type="ChEBI" id="CHEBI:57945"/>
        <dbReference type="EC" id="1.1.1.37"/>
    </reaction>
</comment>
<comment type="similarity">
    <text evidence="1">Belongs to the LDH/MDH superfamily. MDH type 3 family.</text>
</comment>
<reference key="1">
    <citation type="submission" date="2007-09" db="EMBL/GenBank/DDBJ databases">
        <title>Complete genome sequencing of Rickettsia bellii.</title>
        <authorList>
            <person name="Madan A."/>
            <person name="Lee H."/>
            <person name="Madan A."/>
            <person name="Yoon J.-G."/>
            <person name="Ryu G.-Y."/>
            <person name="Dasch G."/>
            <person name="Ereemeva M."/>
        </authorList>
    </citation>
    <scope>NUCLEOTIDE SEQUENCE [LARGE SCALE GENOMIC DNA]</scope>
    <source>
        <strain>OSU 85-389</strain>
    </source>
</reference>
<gene>
    <name evidence="1" type="primary">mdh</name>
    <name type="ordered locus">A1I_04320</name>
</gene>
<evidence type="ECO:0000255" key="1">
    <source>
        <dbReference type="HAMAP-Rule" id="MF_00487"/>
    </source>
</evidence>
<feature type="chain" id="PRO_1000026489" description="Malate dehydrogenase">
    <location>
        <begin position="1"/>
        <end position="314"/>
    </location>
</feature>
<feature type="active site" description="Proton acceptor" evidence="1">
    <location>
        <position position="177"/>
    </location>
</feature>
<feature type="binding site" evidence="1">
    <location>
        <begin position="11"/>
        <end position="16"/>
    </location>
    <ligand>
        <name>NAD(+)</name>
        <dbReference type="ChEBI" id="CHEBI:57540"/>
    </ligand>
</feature>
<feature type="binding site" evidence="1">
    <location>
        <position position="35"/>
    </location>
    <ligand>
        <name>NAD(+)</name>
        <dbReference type="ChEBI" id="CHEBI:57540"/>
    </ligand>
</feature>
<feature type="binding site" evidence="1">
    <location>
        <position position="84"/>
    </location>
    <ligand>
        <name>substrate</name>
    </ligand>
</feature>
<feature type="binding site" evidence="1">
    <location>
        <position position="90"/>
    </location>
    <ligand>
        <name>substrate</name>
    </ligand>
</feature>
<feature type="binding site" evidence="1">
    <location>
        <position position="97"/>
    </location>
    <ligand>
        <name>NAD(+)</name>
        <dbReference type="ChEBI" id="CHEBI:57540"/>
    </ligand>
</feature>
<feature type="binding site" evidence="1">
    <location>
        <begin position="120"/>
        <end position="122"/>
    </location>
    <ligand>
        <name>NAD(+)</name>
        <dbReference type="ChEBI" id="CHEBI:57540"/>
    </ligand>
</feature>
<feature type="binding site" evidence="1">
    <location>
        <position position="122"/>
    </location>
    <ligand>
        <name>substrate</name>
    </ligand>
</feature>
<feature type="binding site" evidence="1">
    <location>
        <position position="153"/>
    </location>
    <ligand>
        <name>substrate</name>
    </ligand>
</feature>
<dbReference type="EC" id="1.1.1.37" evidence="1"/>
<dbReference type="EMBL" id="CP000849">
    <property type="protein sequence ID" value="ABV79207.1"/>
    <property type="molecule type" value="Genomic_DNA"/>
</dbReference>
<dbReference type="RefSeq" id="WP_012151903.1">
    <property type="nucleotide sequence ID" value="NC_009883.1"/>
</dbReference>
<dbReference type="SMR" id="A8GWI0"/>
<dbReference type="KEGG" id="rbo:A1I_04320"/>
<dbReference type="HOGENOM" id="CLU_045401_2_1_5"/>
<dbReference type="GO" id="GO:0004459">
    <property type="term" value="F:L-lactate dehydrogenase activity"/>
    <property type="evidence" value="ECO:0007669"/>
    <property type="project" value="TreeGrafter"/>
</dbReference>
<dbReference type="GO" id="GO:0030060">
    <property type="term" value="F:L-malate dehydrogenase (NAD+) activity"/>
    <property type="evidence" value="ECO:0007669"/>
    <property type="project" value="UniProtKB-UniRule"/>
</dbReference>
<dbReference type="GO" id="GO:0006089">
    <property type="term" value="P:lactate metabolic process"/>
    <property type="evidence" value="ECO:0007669"/>
    <property type="project" value="TreeGrafter"/>
</dbReference>
<dbReference type="GO" id="GO:0006099">
    <property type="term" value="P:tricarboxylic acid cycle"/>
    <property type="evidence" value="ECO:0007669"/>
    <property type="project" value="UniProtKB-UniRule"/>
</dbReference>
<dbReference type="CDD" id="cd01339">
    <property type="entry name" value="LDH-like_MDH"/>
    <property type="match status" value="1"/>
</dbReference>
<dbReference type="FunFam" id="3.40.50.720:FF:000018">
    <property type="entry name" value="Malate dehydrogenase"/>
    <property type="match status" value="1"/>
</dbReference>
<dbReference type="FunFam" id="3.90.110.10:FF:000004">
    <property type="entry name" value="Malate dehydrogenase"/>
    <property type="match status" value="1"/>
</dbReference>
<dbReference type="Gene3D" id="3.90.110.10">
    <property type="entry name" value="Lactate dehydrogenase/glycoside hydrolase, family 4, C-terminal"/>
    <property type="match status" value="1"/>
</dbReference>
<dbReference type="Gene3D" id="3.40.50.720">
    <property type="entry name" value="NAD(P)-binding Rossmann-like Domain"/>
    <property type="match status" value="1"/>
</dbReference>
<dbReference type="HAMAP" id="MF_00487">
    <property type="entry name" value="Malate_dehydrog_3"/>
    <property type="match status" value="1"/>
</dbReference>
<dbReference type="InterPro" id="IPR001557">
    <property type="entry name" value="L-lactate/malate_DH"/>
</dbReference>
<dbReference type="InterPro" id="IPR022383">
    <property type="entry name" value="Lactate/malate_DH_C"/>
</dbReference>
<dbReference type="InterPro" id="IPR001236">
    <property type="entry name" value="Lactate/malate_DH_N"/>
</dbReference>
<dbReference type="InterPro" id="IPR015955">
    <property type="entry name" value="Lactate_DH/Glyco_Ohase_4_C"/>
</dbReference>
<dbReference type="InterPro" id="IPR011275">
    <property type="entry name" value="Malate_DH_type3"/>
</dbReference>
<dbReference type="InterPro" id="IPR036291">
    <property type="entry name" value="NAD(P)-bd_dom_sf"/>
</dbReference>
<dbReference type="NCBIfam" id="TIGR01763">
    <property type="entry name" value="MalateDH_bact"/>
    <property type="match status" value="1"/>
</dbReference>
<dbReference type="NCBIfam" id="NF004863">
    <property type="entry name" value="PRK06223.1"/>
    <property type="match status" value="1"/>
</dbReference>
<dbReference type="PANTHER" id="PTHR43128">
    <property type="entry name" value="L-2-HYDROXYCARBOXYLATE DEHYDROGENASE (NAD(P)(+))"/>
    <property type="match status" value="1"/>
</dbReference>
<dbReference type="PANTHER" id="PTHR43128:SF16">
    <property type="entry name" value="L-LACTATE DEHYDROGENASE"/>
    <property type="match status" value="1"/>
</dbReference>
<dbReference type="Pfam" id="PF02866">
    <property type="entry name" value="Ldh_1_C"/>
    <property type="match status" value="1"/>
</dbReference>
<dbReference type="Pfam" id="PF00056">
    <property type="entry name" value="Ldh_1_N"/>
    <property type="match status" value="1"/>
</dbReference>
<dbReference type="PIRSF" id="PIRSF000102">
    <property type="entry name" value="Lac_mal_DH"/>
    <property type="match status" value="1"/>
</dbReference>
<dbReference type="PRINTS" id="PR00086">
    <property type="entry name" value="LLDHDRGNASE"/>
</dbReference>
<dbReference type="SUPFAM" id="SSF56327">
    <property type="entry name" value="LDH C-terminal domain-like"/>
    <property type="match status" value="1"/>
</dbReference>
<dbReference type="SUPFAM" id="SSF51735">
    <property type="entry name" value="NAD(P)-binding Rossmann-fold domains"/>
    <property type="match status" value="1"/>
</dbReference>
<proteinExistence type="inferred from homology"/>
<organism>
    <name type="scientific">Rickettsia bellii (strain OSU 85-389)</name>
    <dbReference type="NCBI Taxonomy" id="391896"/>
    <lineage>
        <taxon>Bacteria</taxon>
        <taxon>Pseudomonadati</taxon>
        <taxon>Pseudomonadota</taxon>
        <taxon>Alphaproteobacteria</taxon>
        <taxon>Rickettsiales</taxon>
        <taxon>Rickettsiaceae</taxon>
        <taxon>Rickettsieae</taxon>
        <taxon>Rickettsia</taxon>
        <taxon>belli group</taxon>
    </lineage>
</organism>
<keyword id="KW-0520">NAD</keyword>
<keyword id="KW-0560">Oxidoreductase</keyword>
<keyword id="KW-0816">Tricarboxylic acid cycle</keyword>